<accession>A7MXK6</accession>
<comment type="function">
    <text evidence="1">Sequence-specific endonuclease that cleaves unmethylated GATC sequences. It is involved in DNA mismatch repair.</text>
</comment>
<comment type="subcellular location">
    <subcellularLocation>
        <location evidence="1">Cytoplasm</location>
    </subcellularLocation>
</comment>
<comment type="similarity">
    <text evidence="1">Belongs to the MutH family.</text>
</comment>
<dbReference type="EMBL" id="CP000789">
    <property type="protein sequence ID" value="ABU69965.1"/>
    <property type="molecule type" value="Genomic_DNA"/>
</dbReference>
<dbReference type="RefSeq" id="WP_012127036.1">
    <property type="nucleotide sequence ID" value="NC_022269.1"/>
</dbReference>
<dbReference type="SMR" id="A7MXK6"/>
<dbReference type="KEGG" id="vha:VIBHAR_00966"/>
<dbReference type="PATRIC" id="fig|338187.25.peg.1655"/>
<dbReference type="Proteomes" id="UP000008152">
    <property type="component" value="Chromosome I"/>
</dbReference>
<dbReference type="GO" id="GO:0005737">
    <property type="term" value="C:cytoplasm"/>
    <property type="evidence" value="ECO:0007669"/>
    <property type="project" value="UniProtKB-SubCell"/>
</dbReference>
<dbReference type="GO" id="GO:0003677">
    <property type="term" value="F:DNA binding"/>
    <property type="evidence" value="ECO:0007669"/>
    <property type="project" value="InterPro"/>
</dbReference>
<dbReference type="GO" id="GO:0004519">
    <property type="term" value="F:endonuclease activity"/>
    <property type="evidence" value="ECO:0007669"/>
    <property type="project" value="UniProtKB-UniRule"/>
</dbReference>
<dbReference type="GO" id="GO:0006304">
    <property type="term" value="P:DNA modification"/>
    <property type="evidence" value="ECO:0007669"/>
    <property type="project" value="InterPro"/>
</dbReference>
<dbReference type="GO" id="GO:0006298">
    <property type="term" value="P:mismatch repair"/>
    <property type="evidence" value="ECO:0007669"/>
    <property type="project" value="UniProtKB-UniRule"/>
</dbReference>
<dbReference type="CDD" id="cd00583">
    <property type="entry name" value="MutH-like"/>
    <property type="match status" value="1"/>
</dbReference>
<dbReference type="Gene3D" id="3.40.600.10">
    <property type="entry name" value="DNA mismatch repair MutH/Restriction endonuclease, type II"/>
    <property type="match status" value="1"/>
</dbReference>
<dbReference type="HAMAP" id="MF_00759">
    <property type="entry name" value="MutH"/>
    <property type="match status" value="1"/>
</dbReference>
<dbReference type="InterPro" id="IPR004230">
    <property type="entry name" value="DNA_mismatch_repair_MutH"/>
</dbReference>
<dbReference type="InterPro" id="IPR011337">
    <property type="entry name" value="DNA_rep_MutH/RE_typeII_Sau3AI"/>
</dbReference>
<dbReference type="InterPro" id="IPR037057">
    <property type="entry name" value="DNA_rep_MutH/T2_RE_sf"/>
</dbReference>
<dbReference type="InterPro" id="IPR011335">
    <property type="entry name" value="Restrct_endonuc-II-like"/>
</dbReference>
<dbReference type="NCBIfam" id="TIGR02248">
    <property type="entry name" value="mutH_TIGR"/>
    <property type="match status" value="1"/>
</dbReference>
<dbReference type="NCBIfam" id="NF003458">
    <property type="entry name" value="PRK05070.1"/>
    <property type="match status" value="1"/>
</dbReference>
<dbReference type="Pfam" id="PF02976">
    <property type="entry name" value="MutH"/>
    <property type="match status" value="1"/>
</dbReference>
<dbReference type="SMART" id="SM00927">
    <property type="entry name" value="MutH"/>
    <property type="match status" value="1"/>
</dbReference>
<dbReference type="SUPFAM" id="SSF52980">
    <property type="entry name" value="Restriction endonuclease-like"/>
    <property type="match status" value="1"/>
</dbReference>
<gene>
    <name evidence="1" type="primary">mutH</name>
    <name type="ordered locus">VIBHAR_00966</name>
</gene>
<proteinExistence type="inferred from homology"/>
<keyword id="KW-0963">Cytoplasm</keyword>
<keyword id="KW-0227">DNA damage</keyword>
<keyword id="KW-0234">DNA repair</keyword>
<keyword id="KW-0255">Endonuclease</keyword>
<keyword id="KW-0378">Hydrolase</keyword>
<keyword id="KW-0540">Nuclease</keyword>
<organism>
    <name type="scientific">Vibrio campbellii (strain ATCC BAA-1116)</name>
    <dbReference type="NCBI Taxonomy" id="2902295"/>
    <lineage>
        <taxon>Bacteria</taxon>
        <taxon>Pseudomonadati</taxon>
        <taxon>Pseudomonadota</taxon>
        <taxon>Gammaproteobacteria</taxon>
        <taxon>Vibrionales</taxon>
        <taxon>Vibrionaceae</taxon>
        <taxon>Vibrio</taxon>
    </lineage>
</organism>
<protein>
    <recommendedName>
        <fullName evidence="1">DNA mismatch repair protein MutH</fullName>
    </recommendedName>
    <alternativeName>
        <fullName evidence="1">Methyl-directed mismatch repair protein</fullName>
    </alternativeName>
</protein>
<sequence>MKPEPQSEAELMERAQDIAGLSFAELAEEAGMTVPENLKRDKGWVGQLLEWHLGAPAGSKPQQDFAKLGIELKSIPIGYSGKPLETTFVSVAPLTGVQGLTWETSHVRNKLSRVLWVPVEGEREIPLAERRVGSPLIWSPDQEEEQILKNDWEELMELIVLGKFDQISARHGEALHLRPKAANAKALTEAYSSNGKPIKTLPRGFYLRTQFTEQILLKHYINAQSE</sequence>
<reference key="1">
    <citation type="submission" date="2007-08" db="EMBL/GenBank/DDBJ databases">
        <authorList>
            <consortium name="The Vibrio harveyi Genome Sequencing Project"/>
            <person name="Bassler B."/>
            <person name="Clifton S.W."/>
            <person name="Fulton L."/>
            <person name="Delehaunty K."/>
            <person name="Fronick C."/>
            <person name="Harrison M."/>
            <person name="Markivic C."/>
            <person name="Fulton R."/>
            <person name="Tin-Wollam A.-M."/>
            <person name="Shah N."/>
            <person name="Pepin K."/>
            <person name="Nash W."/>
            <person name="Thiruvilangam P."/>
            <person name="Bhonagiri V."/>
            <person name="Waters C."/>
            <person name="Tu K.C."/>
            <person name="Irgon J."/>
            <person name="Wilson R.K."/>
        </authorList>
    </citation>
    <scope>NUCLEOTIDE SEQUENCE [LARGE SCALE GENOMIC DNA]</scope>
    <source>
        <strain>ATCC BAA-1116 / BB120</strain>
    </source>
</reference>
<evidence type="ECO:0000255" key="1">
    <source>
        <dbReference type="HAMAP-Rule" id="MF_00759"/>
    </source>
</evidence>
<name>MUTH_VIBC1</name>
<feature type="chain" id="PRO_1000046717" description="DNA mismatch repair protein MutH">
    <location>
        <begin position="1"/>
        <end position="226"/>
    </location>
</feature>